<gene>
    <name type="primary">LETM1</name>
    <name type="ORF">RCJMB04_13i11</name>
</gene>
<organism>
    <name type="scientific">Gallus gallus</name>
    <name type="common">Chicken</name>
    <dbReference type="NCBI Taxonomy" id="9031"/>
    <lineage>
        <taxon>Eukaryota</taxon>
        <taxon>Metazoa</taxon>
        <taxon>Chordata</taxon>
        <taxon>Craniata</taxon>
        <taxon>Vertebrata</taxon>
        <taxon>Euteleostomi</taxon>
        <taxon>Archelosauria</taxon>
        <taxon>Archosauria</taxon>
        <taxon>Dinosauria</taxon>
        <taxon>Saurischia</taxon>
        <taxon>Theropoda</taxon>
        <taxon>Coelurosauria</taxon>
        <taxon>Aves</taxon>
        <taxon>Neognathae</taxon>
        <taxon>Galloanserae</taxon>
        <taxon>Galliformes</taxon>
        <taxon>Phasianidae</taxon>
        <taxon>Phasianinae</taxon>
        <taxon>Gallus</taxon>
    </lineage>
</organism>
<protein>
    <recommendedName>
        <fullName evidence="6">Mitochondrial proton/calcium exchanger protein</fullName>
    </recommendedName>
    <alternativeName>
        <fullName evidence="1">Electroneutral mitochondrial K(+)/H(+)exchanger</fullName>
        <shortName evidence="1">KHE</shortName>
    </alternativeName>
    <alternativeName>
        <fullName>Leucine zipper-EF-hand-containing transmembrane protein 1</fullName>
    </alternativeName>
</protein>
<evidence type="ECO:0000250" key="1">
    <source>
        <dbReference type="UniProtKB" id="O95202"/>
    </source>
</evidence>
<evidence type="ECO:0000250" key="2">
    <source>
        <dbReference type="UniProtKB" id="Q9Z2I0"/>
    </source>
</evidence>
<evidence type="ECO:0000255" key="3"/>
<evidence type="ECO:0000255" key="4">
    <source>
        <dbReference type="PROSITE-ProRule" id="PRU00448"/>
    </source>
</evidence>
<evidence type="ECO:0000255" key="5">
    <source>
        <dbReference type="PROSITE-ProRule" id="PRU01094"/>
    </source>
</evidence>
<evidence type="ECO:0000305" key="6"/>
<keyword id="KW-0050">Antiport</keyword>
<keyword id="KW-0106">Calcium</keyword>
<keyword id="KW-0109">Calcium transport</keyword>
<keyword id="KW-0175">Coiled coil</keyword>
<keyword id="KW-0406">Ion transport</keyword>
<keyword id="KW-0472">Membrane</keyword>
<keyword id="KW-0479">Metal-binding</keyword>
<keyword id="KW-0496">Mitochondrion</keyword>
<keyword id="KW-0999">Mitochondrion inner membrane</keyword>
<keyword id="KW-0630">Potassium</keyword>
<keyword id="KW-0633">Potassium transport</keyword>
<keyword id="KW-1185">Reference proteome</keyword>
<keyword id="KW-0809">Transit peptide</keyword>
<keyword id="KW-0812">Transmembrane</keyword>
<keyword id="KW-1133">Transmembrane helix</keyword>
<keyword id="KW-0813">Transport</keyword>
<name>LETM1_CHICK</name>
<feature type="transit peptide" description="Mitochondrion" evidence="3">
    <location>
        <begin position="1"/>
        <end position="112"/>
    </location>
</feature>
<feature type="chain" id="PRO_0000380702" description="Mitochondrial proton/calcium exchanger protein">
    <location>
        <begin position="113"/>
        <end position="752"/>
    </location>
</feature>
<feature type="topological domain" description="Mitochondrial intermembrane" evidence="1">
    <location>
        <begin position="113"/>
        <end position="205"/>
    </location>
</feature>
<feature type="transmembrane region" description="Helical" evidence="3">
    <location>
        <begin position="206"/>
        <end position="226"/>
    </location>
</feature>
<feature type="topological domain" description="Mitochondrial matrix" evidence="1">
    <location>
        <begin position="227"/>
        <end position="752"/>
    </location>
</feature>
<feature type="domain" description="Letm1 RBD" evidence="5">
    <location>
        <begin position="249"/>
        <end position="518"/>
    </location>
</feature>
<feature type="domain" description="EF-hand" evidence="4">
    <location>
        <begin position="676"/>
        <end position="711"/>
    </location>
</feature>
<feature type="coiled-coil region" evidence="3">
    <location>
        <begin position="443"/>
        <end position="509"/>
    </location>
</feature>
<feature type="coiled-coil region" evidence="3">
    <location>
        <begin position="550"/>
        <end position="639"/>
    </location>
</feature>
<feature type="coiled-coil region" evidence="3">
    <location>
        <begin position="720"/>
        <end position="752"/>
    </location>
</feature>
<dbReference type="EMBL" id="AJ720251">
    <property type="protein sequence ID" value="CAG31910.1"/>
    <property type="molecule type" value="mRNA"/>
</dbReference>
<dbReference type="RefSeq" id="NP_001006461.2">
    <property type="nucleotide sequence ID" value="NM_001006461.2"/>
</dbReference>
<dbReference type="SMR" id="Q5ZK33"/>
<dbReference type="FunCoup" id="Q5ZK33">
    <property type="interactions" value="3003"/>
</dbReference>
<dbReference type="STRING" id="9031.ENSGALP00000025284"/>
<dbReference type="PaxDb" id="9031-ENSGALP00000043101"/>
<dbReference type="GeneID" id="422898"/>
<dbReference type="KEGG" id="gga:422898"/>
<dbReference type="CTD" id="3954"/>
<dbReference type="VEuPathDB" id="HostDB:geneid_422898"/>
<dbReference type="eggNOG" id="KOG1043">
    <property type="taxonomic scope" value="Eukaryota"/>
</dbReference>
<dbReference type="HOGENOM" id="CLU_008958_2_1_1"/>
<dbReference type="InParanoid" id="Q5ZK33"/>
<dbReference type="OrthoDB" id="624114at2759"/>
<dbReference type="PhylomeDB" id="Q5ZK33"/>
<dbReference type="TreeFam" id="TF316321"/>
<dbReference type="PRO" id="PR:Q5ZK33"/>
<dbReference type="Proteomes" id="UP000000539">
    <property type="component" value="Unassembled WGS sequence"/>
</dbReference>
<dbReference type="GO" id="GO:0005743">
    <property type="term" value="C:mitochondrial inner membrane"/>
    <property type="evidence" value="ECO:0000250"/>
    <property type="project" value="UniProtKB"/>
</dbReference>
<dbReference type="GO" id="GO:0005739">
    <property type="term" value="C:mitochondrion"/>
    <property type="evidence" value="ECO:0000318"/>
    <property type="project" value="GO_Central"/>
</dbReference>
<dbReference type="GO" id="GO:0005509">
    <property type="term" value="F:calcium ion binding"/>
    <property type="evidence" value="ECO:0007669"/>
    <property type="project" value="InterPro"/>
</dbReference>
<dbReference type="GO" id="GO:0015369">
    <property type="term" value="F:calcium:proton antiporter activity"/>
    <property type="evidence" value="ECO:0000250"/>
    <property type="project" value="UniProtKB"/>
</dbReference>
<dbReference type="GO" id="GO:0043022">
    <property type="term" value="F:ribosome binding"/>
    <property type="evidence" value="ECO:0007669"/>
    <property type="project" value="InterPro"/>
</dbReference>
<dbReference type="GO" id="GO:0099093">
    <property type="term" value="P:calcium export from the mitochondrion"/>
    <property type="evidence" value="ECO:0000250"/>
    <property type="project" value="UniProtKB"/>
</dbReference>
<dbReference type="GO" id="GO:0006816">
    <property type="term" value="P:calcium ion transport"/>
    <property type="evidence" value="ECO:0000250"/>
    <property type="project" value="UniProtKB"/>
</dbReference>
<dbReference type="GO" id="GO:0007007">
    <property type="term" value="P:inner mitochondrial membrane organization"/>
    <property type="evidence" value="ECO:0000250"/>
    <property type="project" value="UniProtKB"/>
</dbReference>
<dbReference type="GO" id="GO:0051560">
    <property type="term" value="P:mitochondrial calcium ion homeostasis"/>
    <property type="evidence" value="ECO:0000250"/>
    <property type="project" value="UniProtKB"/>
</dbReference>
<dbReference type="GO" id="GO:0006851">
    <property type="term" value="P:mitochondrial calcium ion transmembrane transport"/>
    <property type="evidence" value="ECO:0000250"/>
    <property type="project" value="UniProtKB"/>
</dbReference>
<dbReference type="GO" id="GO:0007005">
    <property type="term" value="P:mitochondrion organization"/>
    <property type="evidence" value="ECO:0000318"/>
    <property type="project" value="GO_Central"/>
</dbReference>
<dbReference type="GO" id="GO:0006813">
    <property type="term" value="P:potassium ion transport"/>
    <property type="evidence" value="ECO:0007669"/>
    <property type="project" value="UniProtKB-KW"/>
</dbReference>
<dbReference type="GO" id="GO:0034214">
    <property type="term" value="P:protein hexamerization"/>
    <property type="evidence" value="ECO:0000250"/>
    <property type="project" value="UniProtKB"/>
</dbReference>
<dbReference type="GO" id="GO:0051260">
    <property type="term" value="P:protein homooligomerization"/>
    <property type="evidence" value="ECO:0000250"/>
    <property type="project" value="UniProtKB"/>
</dbReference>
<dbReference type="FunFam" id="1.10.238.10:FF:000290">
    <property type="entry name" value="LETM1 and EF-hand domain-containing protein 1, mitochondrial"/>
    <property type="match status" value="1"/>
</dbReference>
<dbReference type="Gene3D" id="1.10.238.10">
    <property type="entry name" value="EF-hand"/>
    <property type="match status" value="1"/>
</dbReference>
<dbReference type="InterPro" id="IPR011992">
    <property type="entry name" value="EF-hand-dom_pair"/>
</dbReference>
<dbReference type="InterPro" id="IPR002048">
    <property type="entry name" value="EF_hand_dom"/>
</dbReference>
<dbReference type="InterPro" id="IPR033122">
    <property type="entry name" value="LETM1-like_RBD"/>
</dbReference>
<dbReference type="InterPro" id="IPR044202">
    <property type="entry name" value="LETM1/MDM38-like"/>
</dbReference>
<dbReference type="PANTHER" id="PTHR14009">
    <property type="entry name" value="LEUCINE ZIPPER-EF-HAND CONTAINING TRANSMEMBRANE PROTEIN"/>
    <property type="match status" value="1"/>
</dbReference>
<dbReference type="PANTHER" id="PTHR14009:SF8">
    <property type="entry name" value="MITOCHONDRIAL PROTON_CALCIUM EXCHANGER PROTEIN"/>
    <property type="match status" value="1"/>
</dbReference>
<dbReference type="Pfam" id="PF07766">
    <property type="entry name" value="LETM1_RBD"/>
    <property type="match status" value="1"/>
</dbReference>
<dbReference type="SUPFAM" id="SSF47473">
    <property type="entry name" value="EF-hand"/>
    <property type="match status" value="1"/>
</dbReference>
<dbReference type="PROSITE" id="PS50222">
    <property type="entry name" value="EF_HAND_2"/>
    <property type="match status" value="1"/>
</dbReference>
<dbReference type="PROSITE" id="PS51758">
    <property type="entry name" value="LETM1_RBD"/>
    <property type="match status" value="1"/>
</dbReference>
<sequence>MLLQSCGRRACRLPRALRRQAPLGNLGDRACLSCTSLRLANKMTVHFKYCTSVAPVYAYSKKDHYCCWTKGLERTYFTLMSSSGSWTPLAAMGVLGPKYLPVRWWHSSRSLQDDSIVEKSLKSLKDKNKKLEEGGPVYSPTEVEVVKKSIGQRIVDELKHYYHGFRLLWIDTKIAARMLWRILHGNTLSRRERRQFLRICADLFRLVPFLVFLVVPFMEFLLPVALKLFPNMLPSTFETKSKKEERLKKQLRVKLELAKFLQDTIEEMALKNKAAKGNVTKDFSTFFQKIRETGERPSNEEILRFSKLFEDELTLDNLTRPQLVALCKLLELQSIGTNNFLRFQLTMRLRTIKADDKMIAEEGVDSLTVKELQAACRARGMRALGVTEERLREQLKQWLDLHLNQEIPTSLLILSRAMYLPDTLSPADQLKTTLQTLPESVAKEAQVKVAEVEGEKVDNKARLEATLQEEAAIRKENEEKEMERITEAAEKAKETLQVAAMKLESAVDLEPAVLQVKESQVAMDSKQELAKADMETLKDTAPVLEGIKGEEITKEEIDMLSDACNKLQEQKKSLTKEKEELEELKGDIQEYNEDLQEIKELSKAGQEEVVEESKASKRLTKRVNRMIGQIDKIINELETNQKTVDVKLDRGDSPPAGENLISIAELINAMKQIQKIPEEKLTRIAEALDENKDGKIDIDNVVKVVELIDKEDVDIGTSQVAEIMALLQKEEKLEEKEKAKEKQDKEAAEVKN</sequence>
<accession>Q5ZK33</accession>
<proteinExistence type="evidence at transcript level"/>
<comment type="function">
    <text evidence="1 2">Plays an important role in maintenance of mitochondrial morphology and in mediating either calcium or potassium/proton antiport (By similarity). Mediates proton-dependent calcium efflux from mitochondrion (By similarity). Also functions as an electroneutral mitochondrial proton/potassium exchanger (By similarity). Required for the maintenance of the tubular shape and cristae organization (By similarity).</text>
</comment>
<comment type="catalytic activity">
    <reaction evidence="1">
        <text>Ca(2+)(in) + 2 H(+)(out) = Ca(2+)(out) + 2 H(+)(in)</text>
        <dbReference type="Rhea" id="RHEA:72199"/>
        <dbReference type="ChEBI" id="CHEBI:15378"/>
        <dbReference type="ChEBI" id="CHEBI:29108"/>
    </reaction>
</comment>
<comment type="catalytic activity">
    <reaction evidence="1">
        <text>K(+)(in) + H(+)(out) = K(+)(out) + H(+)(in)</text>
        <dbReference type="Rhea" id="RHEA:29467"/>
        <dbReference type="ChEBI" id="CHEBI:15378"/>
        <dbReference type="ChEBI" id="CHEBI:29103"/>
    </reaction>
</comment>
<comment type="subunit">
    <text evidence="2">Homohexamer.</text>
</comment>
<comment type="subcellular location">
    <subcellularLocation>
        <location evidence="2">Mitochondrion inner membrane</location>
        <topology evidence="3">Single-pass membrane protein</topology>
    </subcellularLocation>
</comment>
<comment type="similarity">
    <text evidence="6">Belongs to the LETM1 family.</text>
</comment>
<reference key="1">
    <citation type="journal article" date="2005" name="Genome Biol.">
        <title>Full-length cDNAs from chicken bursal lymphocytes to facilitate gene function analysis.</title>
        <authorList>
            <person name="Caldwell R.B."/>
            <person name="Kierzek A.M."/>
            <person name="Arakawa H."/>
            <person name="Bezzubov Y."/>
            <person name="Zaim J."/>
            <person name="Fiedler P."/>
            <person name="Kutter S."/>
            <person name="Blagodatski A."/>
            <person name="Kostovska D."/>
            <person name="Koter M."/>
            <person name="Plachy J."/>
            <person name="Carninci P."/>
            <person name="Hayashizaki Y."/>
            <person name="Buerstedde J.-M."/>
        </authorList>
    </citation>
    <scope>NUCLEOTIDE SEQUENCE [LARGE SCALE MRNA]</scope>
    <source>
        <strain>CB</strain>
        <tissue>Bursa of Fabricius</tissue>
    </source>
</reference>